<proteinExistence type="inferred from homology"/>
<keyword id="KW-0067">ATP-binding</keyword>
<keyword id="KW-0963">Cytoplasm</keyword>
<keyword id="KW-0324">Glycolysis</keyword>
<keyword id="KW-0418">Kinase</keyword>
<keyword id="KW-0547">Nucleotide-binding</keyword>
<keyword id="KW-1185">Reference proteome</keyword>
<keyword id="KW-0808">Transferase</keyword>
<name>PGK_CHLTE</name>
<protein>
    <recommendedName>
        <fullName evidence="1">Phosphoglycerate kinase</fullName>
        <ecNumber evidence="1">2.7.2.3</ecNumber>
    </recommendedName>
</protein>
<comment type="catalytic activity">
    <reaction evidence="1">
        <text>(2R)-3-phosphoglycerate + ATP = (2R)-3-phospho-glyceroyl phosphate + ADP</text>
        <dbReference type="Rhea" id="RHEA:14801"/>
        <dbReference type="ChEBI" id="CHEBI:30616"/>
        <dbReference type="ChEBI" id="CHEBI:57604"/>
        <dbReference type="ChEBI" id="CHEBI:58272"/>
        <dbReference type="ChEBI" id="CHEBI:456216"/>
        <dbReference type="EC" id="2.7.2.3"/>
    </reaction>
</comment>
<comment type="pathway">
    <text evidence="1">Carbohydrate degradation; glycolysis; pyruvate from D-glyceraldehyde 3-phosphate: step 2/5.</text>
</comment>
<comment type="subunit">
    <text evidence="1">Monomer.</text>
</comment>
<comment type="subcellular location">
    <subcellularLocation>
        <location evidence="1">Cytoplasm</location>
    </subcellularLocation>
</comment>
<comment type="similarity">
    <text evidence="1">Belongs to the phosphoglycerate kinase family.</text>
</comment>
<sequence>MQKKTLSDISLQGKRVLMRVDFNVPLDQDRNITDEKRIVEALPSIRKVIDNGGRLILMSHLGRPKGKVNPAFSLSPVAKRLSELLDCPVTMAGDCIGTEVMQQVLALQDGDVLMLENLRFHPEEEANDPDFARELASLGEIYVNDAFGTAHRAHASTEGITHFMQTAVAGYLIEKELRYLGTALNDAQRPFVAILGGAKISGKIDVLESLFEKVDTVLVGGAMVFTFFKAQGLDVGNSLVEENKLELAVSLLEKAKAKNVRLLLPEDVVVAGEISADAPSRVEPVSAISAGMIGLDIGPATIETYRKEILDAKTVLWNGPMGVFEIDQFARGTFAVAQALADATAEGAITIIGGGDSAAAIAKAGLSDKVTHVSTGGGASLEFLEGKELPGIAALND</sequence>
<organism>
    <name type="scientific">Chlorobaculum tepidum (strain ATCC 49652 / DSM 12025 / NBRC 103806 / TLS)</name>
    <name type="common">Chlorobium tepidum</name>
    <dbReference type="NCBI Taxonomy" id="194439"/>
    <lineage>
        <taxon>Bacteria</taxon>
        <taxon>Pseudomonadati</taxon>
        <taxon>Chlorobiota</taxon>
        <taxon>Chlorobiia</taxon>
        <taxon>Chlorobiales</taxon>
        <taxon>Chlorobiaceae</taxon>
        <taxon>Chlorobaculum</taxon>
    </lineage>
</organism>
<reference key="1">
    <citation type="journal article" date="2002" name="Proc. Natl. Acad. Sci. U.S.A.">
        <title>The complete genome sequence of Chlorobium tepidum TLS, a photosynthetic, anaerobic, green-sulfur bacterium.</title>
        <authorList>
            <person name="Eisen J.A."/>
            <person name="Nelson K.E."/>
            <person name="Paulsen I.T."/>
            <person name="Heidelberg J.F."/>
            <person name="Wu M."/>
            <person name="Dodson R.J."/>
            <person name="DeBoy R.T."/>
            <person name="Gwinn M.L."/>
            <person name="Nelson W.C."/>
            <person name="Haft D.H."/>
            <person name="Hickey E.K."/>
            <person name="Peterson J.D."/>
            <person name="Durkin A.S."/>
            <person name="Kolonay J.F."/>
            <person name="Yang F."/>
            <person name="Holt I.E."/>
            <person name="Umayam L.A."/>
            <person name="Mason T.M."/>
            <person name="Brenner M."/>
            <person name="Shea T.P."/>
            <person name="Parksey D.S."/>
            <person name="Nierman W.C."/>
            <person name="Feldblyum T.V."/>
            <person name="Hansen C.L."/>
            <person name="Craven M.B."/>
            <person name="Radune D."/>
            <person name="Vamathevan J.J."/>
            <person name="Khouri H.M."/>
            <person name="White O."/>
            <person name="Gruber T.M."/>
            <person name="Ketchum K.A."/>
            <person name="Venter J.C."/>
            <person name="Tettelin H."/>
            <person name="Bryant D.A."/>
            <person name="Fraser C.M."/>
        </authorList>
    </citation>
    <scope>NUCLEOTIDE SEQUENCE [LARGE SCALE GENOMIC DNA]</scope>
    <source>
        <strain>ATCC 49652 / DSM 12025 / NBRC 103806 / TLS</strain>
    </source>
</reference>
<gene>
    <name evidence="1" type="primary">pgk</name>
    <name type="ordered locus">CT2222</name>
</gene>
<dbReference type="EC" id="2.7.2.3" evidence="1"/>
<dbReference type="EMBL" id="AE006470">
    <property type="protein sequence ID" value="AAM73438.1"/>
    <property type="molecule type" value="Genomic_DNA"/>
</dbReference>
<dbReference type="RefSeq" id="NP_663096.1">
    <property type="nucleotide sequence ID" value="NC_002932.3"/>
</dbReference>
<dbReference type="RefSeq" id="WP_010933875.1">
    <property type="nucleotide sequence ID" value="NC_002932.3"/>
</dbReference>
<dbReference type="SMR" id="Q8KAE1"/>
<dbReference type="STRING" id="194439.CT2222"/>
<dbReference type="EnsemblBacteria" id="AAM73438">
    <property type="protein sequence ID" value="AAM73438"/>
    <property type="gene ID" value="CT2222"/>
</dbReference>
<dbReference type="KEGG" id="cte:CT2222"/>
<dbReference type="PATRIC" id="fig|194439.7.peg.2016"/>
<dbReference type="eggNOG" id="COG0126">
    <property type="taxonomic scope" value="Bacteria"/>
</dbReference>
<dbReference type="HOGENOM" id="CLU_025427_0_2_10"/>
<dbReference type="OrthoDB" id="9808460at2"/>
<dbReference type="UniPathway" id="UPA00109">
    <property type="reaction ID" value="UER00185"/>
</dbReference>
<dbReference type="Proteomes" id="UP000001007">
    <property type="component" value="Chromosome"/>
</dbReference>
<dbReference type="GO" id="GO:0005829">
    <property type="term" value="C:cytosol"/>
    <property type="evidence" value="ECO:0007669"/>
    <property type="project" value="TreeGrafter"/>
</dbReference>
<dbReference type="GO" id="GO:0043531">
    <property type="term" value="F:ADP binding"/>
    <property type="evidence" value="ECO:0007669"/>
    <property type="project" value="TreeGrafter"/>
</dbReference>
<dbReference type="GO" id="GO:0005524">
    <property type="term" value="F:ATP binding"/>
    <property type="evidence" value="ECO:0007669"/>
    <property type="project" value="UniProtKB-KW"/>
</dbReference>
<dbReference type="GO" id="GO:0004618">
    <property type="term" value="F:phosphoglycerate kinase activity"/>
    <property type="evidence" value="ECO:0007669"/>
    <property type="project" value="UniProtKB-UniRule"/>
</dbReference>
<dbReference type="GO" id="GO:0006094">
    <property type="term" value="P:gluconeogenesis"/>
    <property type="evidence" value="ECO:0007669"/>
    <property type="project" value="TreeGrafter"/>
</dbReference>
<dbReference type="GO" id="GO:0006096">
    <property type="term" value="P:glycolytic process"/>
    <property type="evidence" value="ECO:0007669"/>
    <property type="project" value="UniProtKB-UniRule"/>
</dbReference>
<dbReference type="CDD" id="cd00318">
    <property type="entry name" value="Phosphoglycerate_kinase"/>
    <property type="match status" value="1"/>
</dbReference>
<dbReference type="FunFam" id="3.40.50.1260:FF:000003">
    <property type="entry name" value="Phosphoglycerate kinase"/>
    <property type="match status" value="1"/>
</dbReference>
<dbReference type="FunFam" id="3.40.50.1260:FF:000006">
    <property type="entry name" value="Phosphoglycerate kinase"/>
    <property type="match status" value="1"/>
</dbReference>
<dbReference type="Gene3D" id="3.40.50.1260">
    <property type="entry name" value="Phosphoglycerate kinase, N-terminal domain"/>
    <property type="match status" value="2"/>
</dbReference>
<dbReference type="HAMAP" id="MF_00145">
    <property type="entry name" value="Phosphoglyc_kinase"/>
    <property type="match status" value="1"/>
</dbReference>
<dbReference type="InterPro" id="IPR001576">
    <property type="entry name" value="Phosphoglycerate_kinase"/>
</dbReference>
<dbReference type="InterPro" id="IPR015911">
    <property type="entry name" value="Phosphoglycerate_kinase_CS"/>
</dbReference>
<dbReference type="InterPro" id="IPR015824">
    <property type="entry name" value="Phosphoglycerate_kinase_N"/>
</dbReference>
<dbReference type="InterPro" id="IPR036043">
    <property type="entry name" value="Phosphoglycerate_kinase_sf"/>
</dbReference>
<dbReference type="PANTHER" id="PTHR11406">
    <property type="entry name" value="PHOSPHOGLYCERATE KINASE"/>
    <property type="match status" value="1"/>
</dbReference>
<dbReference type="PANTHER" id="PTHR11406:SF23">
    <property type="entry name" value="PHOSPHOGLYCERATE KINASE 1, CHLOROPLASTIC-RELATED"/>
    <property type="match status" value="1"/>
</dbReference>
<dbReference type="Pfam" id="PF00162">
    <property type="entry name" value="PGK"/>
    <property type="match status" value="1"/>
</dbReference>
<dbReference type="PIRSF" id="PIRSF000724">
    <property type="entry name" value="Pgk"/>
    <property type="match status" value="1"/>
</dbReference>
<dbReference type="PRINTS" id="PR00477">
    <property type="entry name" value="PHGLYCKINASE"/>
</dbReference>
<dbReference type="SUPFAM" id="SSF53748">
    <property type="entry name" value="Phosphoglycerate kinase"/>
    <property type="match status" value="1"/>
</dbReference>
<dbReference type="PROSITE" id="PS00111">
    <property type="entry name" value="PGLYCERATE_KINASE"/>
    <property type="match status" value="1"/>
</dbReference>
<accession>Q8KAE1</accession>
<feature type="chain" id="PRO_0000145928" description="Phosphoglycerate kinase">
    <location>
        <begin position="1"/>
        <end position="397"/>
    </location>
</feature>
<feature type="binding site" evidence="1">
    <location>
        <begin position="21"/>
        <end position="23"/>
    </location>
    <ligand>
        <name>substrate</name>
    </ligand>
</feature>
<feature type="binding site" evidence="1">
    <location>
        <position position="37"/>
    </location>
    <ligand>
        <name>substrate</name>
    </ligand>
</feature>
<feature type="binding site" evidence="1">
    <location>
        <begin position="60"/>
        <end position="63"/>
    </location>
    <ligand>
        <name>substrate</name>
    </ligand>
</feature>
<feature type="binding site" evidence="1">
    <location>
        <position position="119"/>
    </location>
    <ligand>
        <name>substrate</name>
    </ligand>
</feature>
<feature type="binding site" evidence="1">
    <location>
        <position position="152"/>
    </location>
    <ligand>
        <name>substrate</name>
    </ligand>
</feature>
<feature type="binding site" evidence="1">
    <location>
        <position position="203"/>
    </location>
    <ligand>
        <name>ATP</name>
        <dbReference type="ChEBI" id="CHEBI:30616"/>
    </ligand>
</feature>
<feature type="binding site" evidence="1">
    <location>
        <position position="294"/>
    </location>
    <ligand>
        <name>ATP</name>
        <dbReference type="ChEBI" id="CHEBI:30616"/>
    </ligand>
</feature>
<feature type="binding site" evidence="1">
    <location>
        <position position="325"/>
    </location>
    <ligand>
        <name>ATP</name>
        <dbReference type="ChEBI" id="CHEBI:30616"/>
    </ligand>
</feature>
<feature type="binding site" evidence="1">
    <location>
        <begin position="354"/>
        <end position="357"/>
    </location>
    <ligand>
        <name>ATP</name>
        <dbReference type="ChEBI" id="CHEBI:30616"/>
    </ligand>
</feature>
<evidence type="ECO:0000255" key="1">
    <source>
        <dbReference type="HAMAP-Rule" id="MF_00145"/>
    </source>
</evidence>